<name>MICU3_RAT</name>
<proteinExistence type="inferred from homology"/>
<dbReference type="RefSeq" id="XP_006253262.1">
    <property type="nucleotide sequence ID" value="XM_006253200.5"/>
</dbReference>
<dbReference type="SMR" id="A0A8I6A2H6"/>
<dbReference type="FunCoup" id="A0A8I6A2H6">
    <property type="interactions" value="2002"/>
</dbReference>
<dbReference type="PhosphoSitePlus" id="A0A8I6A2H6"/>
<dbReference type="PaxDb" id="10116-ENSRNOP00000017025"/>
<dbReference type="Ensembl" id="ENSRNOT00000098345.1">
    <property type="protein sequence ID" value="ENSRNOP00000087041.1"/>
    <property type="gene ID" value="ENSRNOG00000012767.8"/>
</dbReference>
<dbReference type="Ensembl" id="ENSRNOT00055019639">
    <property type="protein sequence ID" value="ENSRNOP00055015834"/>
    <property type="gene ID" value="ENSRNOG00055011565"/>
</dbReference>
<dbReference type="Ensembl" id="ENSRNOT00055019641">
    <property type="protein sequence ID" value="ENSRNOP00055015836"/>
    <property type="gene ID" value="ENSRNOG00055011565"/>
</dbReference>
<dbReference type="Ensembl" id="ENSRNOT00055019643">
    <property type="protein sequence ID" value="ENSRNOP00055015838"/>
    <property type="gene ID" value="ENSRNOG00055011565"/>
</dbReference>
<dbReference type="Ensembl" id="ENSRNOT00055019644">
    <property type="protein sequence ID" value="ENSRNOP00055015839"/>
    <property type="gene ID" value="ENSRNOG00055011565"/>
</dbReference>
<dbReference type="GeneID" id="364601"/>
<dbReference type="AGR" id="RGD:1563411"/>
<dbReference type="CTD" id="286097"/>
<dbReference type="RGD" id="1563411">
    <property type="gene designation" value="Micu3"/>
</dbReference>
<dbReference type="eggNOG" id="KOG2643">
    <property type="taxonomic scope" value="Eukaryota"/>
</dbReference>
<dbReference type="GeneTree" id="ENSGT00950000183079"/>
<dbReference type="HOGENOM" id="CLU_027103_0_2_1"/>
<dbReference type="InParanoid" id="D3ZG95"/>
<dbReference type="OMA" id="DEPAYPM"/>
<dbReference type="OrthoDB" id="43402at9989"/>
<dbReference type="TreeFam" id="TF320374"/>
<dbReference type="Reactome" id="R-RNO-8949215">
    <property type="pathway name" value="Mitochondrial calcium ion transport"/>
</dbReference>
<dbReference type="Reactome" id="R-RNO-8949664">
    <property type="pathway name" value="Processing of SMDT1"/>
</dbReference>
<dbReference type="Proteomes" id="UP000002494">
    <property type="component" value="Chromosome 16"/>
</dbReference>
<dbReference type="Bgee" id="ENSRNOG00000012767">
    <property type="expression patterns" value="Expressed in cerebellum and 19 other cell types or tissues"/>
</dbReference>
<dbReference type="GO" id="GO:0005758">
    <property type="term" value="C:mitochondrial intermembrane space"/>
    <property type="evidence" value="ECO:0007669"/>
    <property type="project" value="UniProtKB-SubCell"/>
</dbReference>
<dbReference type="GO" id="GO:0005739">
    <property type="term" value="C:mitochondrion"/>
    <property type="evidence" value="ECO:0000266"/>
    <property type="project" value="RGD"/>
</dbReference>
<dbReference type="GO" id="GO:1990246">
    <property type="term" value="C:uniplex complex"/>
    <property type="evidence" value="ECO:0000318"/>
    <property type="project" value="GO_Central"/>
</dbReference>
<dbReference type="GO" id="GO:0005246">
    <property type="term" value="F:calcium channel regulator activity"/>
    <property type="evidence" value="ECO:0000266"/>
    <property type="project" value="RGD"/>
</dbReference>
<dbReference type="GO" id="GO:0005509">
    <property type="term" value="F:calcium ion binding"/>
    <property type="evidence" value="ECO:0000318"/>
    <property type="project" value="GO_Central"/>
</dbReference>
<dbReference type="GO" id="GO:0061891">
    <property type="term" value="F:calcium ion sensor activity"/>
    <property type="evidence" value="ECO:0000314"/>
    <property type="project" value="UniProtKB"/>
</dbReference>
<dbReference type="GO" id="GO:0046982">
    <property type="term" value="F:protein heterodimerization activity"/>
    <property type="evidence" value="ECO:0000266"/>
    <property type="project" value="RGD"/>
</dbReference>
<dbReference type="GO" id="GO:0036444">
    <property type="term" value="P:calcium import into the mitochondrion"/>
    <property type="evidence" value="ECO:0000314"/>
    <property type="project" value="UniProtKB"/>
</dbReference>
<dbReference type="GO" id="GO:0071277">
    <property type="term" value="P:cellular response to calcium ion"/>
    <property type="evidence" value="ECO:0000266"/>
    <property type="project" value="RGD"/>
</dbReference>
<dbReference type="GO" id="GO:0051560">
    <property type="term" value="P:mitochondrial calcium ion homeostasis"/>
    <property type="evidence" value="ECO:0000318"/>
    <property type="project" value="GO_Central"/>
</dbReference>
<dbReference type="GO" id="GO:0001956">
    <property type="term" value="P:positive regulation of neurotransmitter secretion"/>
    <property type="evidence" value="ECO:0000314"/>
    <property type="project" value="UniProtKB"/>
</dbReference>
<dbReference type="CDD" id="cd16175">
    <property type="entry name" value="EFh_MICU3"/>
    <property type="match status" value="1"/>
</dbReference>
<dbReference type="FunFam" id="1.10.238.10:FF:000149">
    <property type="entry name" value="Mitochondrial calcium uptake family member 3"/>
    <property type="match status" value="1"/>
</dbReference>
<dbReference type="Gene3D" id="1.10.238.10">
    <property type="entry name" value="EF-hand"/>
    <property type="match status" value="2"/>
</dbReference>
<dbReference type="InterPro" id="IPR011992">
    <property type="entry name" value="EF-hand-dom_pair"/>
</dbReference>
<dbReference type="InterPro" id="IPR018247">
    <property type="entry name" value="EF_Hand_1_Ca_BS"/>
</dbReference>
<dbReference type="InterPro" id="IPR002048">
    <property type="entry name" value="EF_hand_dom"/>
</dbReference>
<dbReference type="InterPro" id="IPR039800">
    <property type="entry name" value="MICU1/2/3"/>
</dbReference>
<dbReference type="PANTHER" id="PTHR12294:SF10">
    <property type="entry name" value="CALCIUM UPTAKE PROTEIN 3, MITOCHONDRIAL"/>
    <property type="match status" value="1"/>
</dbReference>
<dbReference type="PANTHER" id="PTHR12294">
    <property type="entry name" value="EF HAND DOMAIN FAMILY A1,A2-RELATED"/>
    <property type="match status" value="1"/>
</dbReference>
<dbReference type="Pfam" id="PF13499">
    <property type="entry name" value="EF-hand_7"/>
    <property type="match status" value="1"/>
</dbReference>
<dbReference type="SMART" id="SM00054">
    <property type="entry name" value="EFh"/>
    <property type="match status" value="2"/>
</dbReference>
<dbReference type="SUPFAM" id="SSF47473">
    <property type="entry name" value="EF-hand"/>
    <property type="match status" value="2"/>
</dbReference>
<dbReference type="PROSITE" id="PS00018">
    <property type="entry name" value="EF_HAND_1"/>
    <property type="match status" value="1"/>
</dbReference>
<dbReference type="PROSITE" id="PS50222">
    <property type="entry name" value="EF_HAND_2"/>
    <property type="match status" value="2"/>
</dbReference>
<feature type="transit peptide" description="Mitochondrion" evidence="4">
    <location>
        <begin position="1"/>
        <end position="6"/>
    </location>
</feature>
<feature type="chain" id="PRO_0000460498" description="Calcium uptake protein 3, mitochondrial" evidence="4">
    <location>
        <begin position="7"/>
        <end position="523"/>
    </location>
</feature>
<feature type="domain" description="EF-hand 1" evidence="5">
    <location>
        <begin position="225"/>
        <end position="260"/>
    </location>
</feature>
<feature type="domain" description="EF-hand 2; degenerate" evidence="5">
    <location>
        <begin position="414"/>
        <end position="429"/>
    </location>
</feature>
<feature type="domain" description="EF-hand 3" evidence="5">
    <location>
        <begin position="463"/>
        <end position="498"/>
    </location>
</feature>
<feature type="region of interest" description="Disordered" evidence="6">
    <location>
        <begin position="18"/>
        <end position="48"/>
    </location>
</feature>
<feature type="binding site" evidence="1">
    <location>
        <position position="238"/>
    </location>
    <ligand>
        <name>Ca(2+)</name>
        <dbReference type="ChEBI" id="CHEBI:29108"/>
        <label>1</label>
    </ligand>
</feature>
<feature type="binding site" evidence="1">
    <location>
        <position position="240"/>
    </location>
    <ligand>
        <name>Ca(2+)</name>
        <dbReference type="ChEBI" id="CHEBI:29108"/>
        <label>1</label>
    </ligand>
</feature>
<feature type="binding site" evidence="1">
    <location>
        <position position="242"/>
    </location>
    <ligand>
        <name>Ca(2+)</name>
        <dbReference type="ChEBI" id="CHEBI:29108"/>
        <label>1</label>
    </ligand>
</feature>
<feature type="binding site" evidence="1">
    <location>
        <position position="244"/>
    </location>
    <ligand>
        <name>Ca(2+)</name>
        <dbReference type="ChEBI" id="CHEBI:29108"/>
        <label>1</label>
    </ligand>
</feature>
<feature type="binding site" evidence="1">
    <location>
        <position position="246"/>
    </location>
    <ligand>
        <name>Ca(2+)</name>
        <dbReference type="ChEBI" id="CHEBI:29108"/>
        <label>1</label>
    </ligand>
</feature>
<feature type="binding site" evidence="1">
    <location>
        <position position="249"/>
    </location>
    <ligand>
        <name>Ca(2+)</name>
        <dbReference type="ChEBI" id="CHEBI:29108"/>
        <label>1</label>
    </ligand>
</feature>
<feature type="binding site" evidence="1">
    <location>
        <position position="476"/>
    </location>
    <ligand>
        <name>Ca(2+)</name>
        <dbReference type="ChEBI" id="CHEBI:29108"/>
        <label>2</label>
    </ligand>
</feature>
<feature type="binding site" evidence="1">
    <location>
        <position position="478"/>
    </location>
    <ligand>
        <name>Ca(2+)</name>
        <dbReference type="ChEBI" id="CHEBI:29108"/>
        <label>2</label>
    </ligand>
</feature>
<feature type="binding site" evidence="1">
    <location>
        <position position="480"/>
    </location>
    <ligand>
        <name>Ca(2+)</name>
        <dbReference type="ChEBI" id="CHEBI:29108"/>
        <label>2</label>
    </ligand>
</feature>
<feature type="binding site" evidence="1">
    <location>
        <position position="482"/>
    </location>
    <ligand>
        <name>Ca(2+)</name>
        <dbReference type="ChEBI" id="CHEBI:29108"/>
        <label>2</label>
    </ligand>
</feature>
<feature type="binding site" evidence="1">
    <location>
        <position position="487"/>
    </location>
    <ligand>
        <name>Ca(2+)</name>
        <dbReference type="ChEBI" id="CHEBI:29108"/>
        <label>2</label>
    </ligand>
</feature>
<feature type="disulfide bond" description="Interchain (with C-465 in MICU1)" evidence="1">
    <location>
        <position position="515"/>
    </location>
</feature>
<accession>A0A8I6A2H6</accession>
<accession>A0A8I5ZTV9</accession>
<accession>A0A8I6AA12</accession>
<accession>D3ZG95</accession>
<protein>
    <recommendedName>
        <fullName evidence="9">Calcium uptake protein 3, mitochondrial</fullName>
    </recommendedName>
</protein>
<gene>
    <name evidence="8 10" type="primary">Micu3</name>
</gene>
<reference key="1">
    <citation type="journal article" date="2004" name="Nature">
        <title>Genome sequence of the Brown Norway rat yields insights into mammalian evolution.</title>
        <authorList>
            <person name="Gibbs R.A."/>
            <person name="Weinstock G.M."/>
            <person name="Metzker M.L."/>
            <person name="Muzny D.M."/>
            <person name="Sodergren E.J."/>
            <person name="Scherer S."/>
            <person name="Scott G."/>
            <person name="Steffen D."/>
            <person name="Worley K.C."/>
            <person name="Burch P.E."/>
            <person name="Okwuonu G."/>
            <person name="Hines S."/>
            <person name="Lewis L."/>
            <person name="Deramo C."/>
            <person name="Delgado O."/>
            <person name="Dugan-Rocha S."/>
            <person name="Miner G."/>
            <person name="Morgan M."/>
            <person name="Hawes A."/>
            <person name="Gill R."/>
            <person name="Holt R.A."/>
            <person name="Adams M.D."/>
            <person name="Amanatides P.G."/>
            <person name="Baden-Tillson H."/>
            <person name="Barnstead M."/>
            <person name="Chin S."/>
            <person name="Evans C.A."/>
            <person name="Ferriera S."/>
            <person name="Fosler C."/>
            <person name="Glodek A."/>
            <person name="Gu Z."/>
            <person name="Jennings D."/>
            <person name="Kraft C.L."/>
            <person name="Nguyen T."/>
            <person name="Pfannkoch C.M."/>
            <person name="Sitter C."/>
            <person name="Sutton G.G."/>
            <person name="Venter J.C."/>
            <person name="Woodage T."/>
            <person name="Smith D."/>
            <person name="Lee H.-M."/>
            <person name="Gustafson E."/>
            <person name="Cahill P."/>
            <person name="Kana A."/>
            <person name="Doucette-Stamm L."/>
            <person name="Weinstock K."/>
            <person name="Fechtel K."/>
            <person name="Weiss R.B."/>
            <person name="Dunn D.M."/>
            <person name="Green E.D."/>
            <person name="Blakesley R.W."/>
            <person name="Bouffard G.G."/>
            <person name="De Jong P.J."/>
            <person name="Osoegawa K."/>
            <person name="Zhu B."/>
            <person name="Marra M."/>
            <person name="Schein J."/>
            <person name="Bosdet I."/>
            <person name="Fjell C."/>
            <person name="Jones S."/>
            <person name="Krzywinski M."/>
            <person name="Mathewson C."/>
            <person name="Siddiqui A."/>
            <person name="Wye N."/>
            <person name="McPherson J."/>
            <person name="Zhao S."/>
            <person name="Fraser C.M."/>
            <person name="Shetty J."/>
            <person name="Shatsman S."/>
            <person name="Geer K."/>
            <person name="Chen Y."/>
            <person name="Abramzon S."/>
            <person name="Nierman W.C."/>
            <person name="Havlak P.H."/>
            <person name="Chen R."/>
            <person name="Durbin K.J."/>
            <person name="Egan A."/>
            <person name="Ren Y."/>
            <person name="Song X.-Z."/>
            <person name="Li B."/>
            <person name="Liu Y."/>
            <person name="Qin X."/>
            <person name="Cawley S."/>
            <person name="Cooney A.J."/>
            <person name="D'Souza L.M."/>
            <person name="Martin K."/>
            <person name="Wu J.Q."/>
            <person name="Gonzalez-Garay M.L."/>
            <person name="Jackson A.R."/>
            <person name="Kalafus K.J."/>
            <person name="McLeod M.P."/>
            <person name="Milosavljevic A."/>
            <person name="Virk D."/>
            <person name="Volkov A."/>
            <person name="Wheeler D.A."/>
            <person name="Zhang Z."/>
            <person name="Bailey J.A."/>
            <person name="Eichler E.E."/>
            <person name="Tuzun E."/>
            <person name="Birney E."/>
            <person name="Mongin E."/>
            <person name="Ureta-Vidal A."/>
            <person name="Woodwark C."/>
            <person name="Zdobnov E."/>
            <person name="Bork P."/>
            <person name="Suyama M."/>
            <person name="Torrents D."/>
            <person name="Alexandersson M."/>
            <person name="Trask B.J."/>
            <person name="Young J.M."/>
            <person name="Huang H."/>
            <person name="Wang H."/>
            <person name="Xing H."/>
            <person name="Daniels S."/>
            <person name="Gietzen D."/>
            <person name="Schmidt J."/>
            <person name="Stevens K."/>
            <person name="Vitt U."/>
            <person name="Wingrove J."/>
            <person name="Camara F."/>
            <person name="Mar Alba M."/>
            <person name="Abril J.F."/>
            <person name="Guigo R."/>
            <person name="Smit A."/>
            <person name="Dubchak I."/>
            <person name="Rubin E.M."/>
            <person name="Couronne O."/>
            <person name="Poliakov A."/>
            <person name="Huebner N."/>
            <person name="Ganten D."/>
            <person name="Goesele C."/>
            <person name="Hummel O."/>
            <person name="Kreitler T."/>
            <person name="Lee Y.-A."/>
            <person name="Monti J."/>
            <person name="Schulz H."/>
            <person name="Zimdahl H."/>
            <person name="Himmelbauer H."/>
            <person name="Lehrach H."/>
            <person name="Jacob H.J."/>
            <person name="Bromberg S."/>
            <person name="Gullings-Handley J."/>
            <person name="Jensen-Seaman M.I."/>
            <person name="Kwitek A.E."/>
            <person name="Lazar J."/>
            <person name="Pasko D."/>
            <person name="Tonellato P.J."/>
            <person name="Twigger S."/>
            <person name="Ponting C.P."/>
            <person name="Duarte J.M."/>
            <person name="Rice S."/>
            <person name="Goodstadt L."/>
            <person name="Beatson S.A."/>
            <person name="Emes R.D."/>
            <person name="Winter E.E."/>
            <person name="Webber C."/>
            <person name="Brandt P."/>
            <person name="Nyakatura G."/>
            <person name="Adetobi M."/>
            <person name="Chiaromonte F."/>
            <person name="Elnitski L."/>
            <person name="Eswara P."/>
            <person name="Hardison R.C."/>
            <person name="Hou M."/>
            <person name="Kolbe D."/>
            <person name="Makova K."/>
            <person name="Miller W."/>
            <person name="Nekrutenko A."/>
            <person name="Riemer C."/>
            <person name="Schwartz S."/>
            <person name="Taylor J."/>
            <person name="Yang S."/>
            <person name="Zhang Y."/>
            <person name="Lindpaintner K."/>
            <person name="Andrews T.D."/>
            <person name="Caccamo M."/>
            <person name="Clamp M."/>
            <person name="Clarke L."/>
            <person name="Curwen V."/>
            <person name="Durbin R.M."/>
            <person name="Eyras E."/>
            <person name="Searle S.M."/>
            <person name="Cooper G.M."/>
            <person name="Batzoglou S."/>
            <person name="Brudno M."/>
            <person name="Sidow A."/>
            <person name="Stone E.A."/>
            <person name="Payseur B.A."/>
            <person name="Bourque G."/>
            <person name="Lopez-Otin C."/>
            <person name="Puente X.S."/>
            <person name="Chakrabarti K."/>
            <person name="Chatterji S."/>
            <person name="Dewey C."/>
            <person name="Pachter L."/>
            <person name="Bray N."/>
            <person name="Yap V.B."/>
            <person name="Caspi A."/>
            <person name="Tesler G."/>
            <person name="Pevzner P.A."/>
            <person name="Haussler D."/>
            <person name="Roskin K.M."/>
            <person name="Baertsch R."/>
            <person name="Clawson H."/>
            <person name="Furey T.S."/>
            <person name="Hinrichs A.S."/>
            <person name="Karolchik D."/>
            <person name="Kent W.J."/>
            <person name="Rosenbloom K.R."/>
            <person name="Trumbower H."/>
            <person name="Weirauch M."/>
            <person name="Cooper D.N."/>
            <person name="Stenson P.D."/>
            <person name="Ma B."/>
            <person name="Brent M."/>
            <person name="Arumugam M."/>
            <person name="Shteynberg D."/>
            <person name="Copley R.R."/>
            <person name="Taylor M.S."/>
            <person name="Riethman H."/>
            <person name="Mudunuri U."/>
            <person name="Peterson J."/>
            <person name="Guyer M."/>
            <person name="Felsenfeld A."/>
            <person name="Old S."/>
            <person name="Mockrin S."/>
            <person name="Collins F.S."/>
        </authorList>
    </citation>
    <scope>NUCLEOTIDE SEQUENCE [LARGE SCALE GENOMIC DNA]</scope>
    <source>
        <strain>Brown Norway</strain>
    </source>
</reference>
<reference key="2">
    <citation type="journal article" date="2020" name="Neuron">
        <title>Molecular tuning of the axonal mitochondrial Ca2+ uniporter ensures metabolic flexibility of neurotransmission.</title>
        <authorList>
            <person name="Ashrafi G."/>
            <person name="de Juan-Sanz J."/>
            <person name="Farrell R.J."/>
            <person name="Ryan T.A."/>
        </authorList>
    </citation>
    <scope>FUNCTION</scope>
</reference>
<keyword id="KW-0106">Calcium</keyword>
<keyword id="KW-1015">Disulfide bond</keyword>
<keyword id="KW-0472">Membrane</keyword>
<keyword id="KW-0479">Metal-binding</keyword>
<keyword id="KW-0496">Mitochondrion</keyword>
<keyword id="KW-0999">Mitochondrion inner membrane</keyword>
<keyword id="KW-1185">Reference proteome</keyword>
<keyword id="KW-0677">Repeat</keyword>
<keyword id="KW-0809">Transit peptide</keyword>
<organism>
    <name type="scientific">Rattus norvegicus</name>
    <name type="common">Rat</name>
    <dbReference type="NCBI Taxonomy" id="10116"/>
    <lineage>
        <taxon>Eukaryota</taxon>
        <taxon>Metazoa</taxon>
        <taxon>Chordata</taxon>
        <taxon>Craniata</taxon>
        <taxon>Vertebrata</taxon>
        <taxon>Euteleostomi</taxon>
        <taxon>Mammalia</taxon>
        <taxon>Eutheria</taxon>
        <taxon>Euarchontoglires</taxon>
        <taxon>Glires</taxon>
        <taxon>Rodentia</taxon>
        <taxon>Myomorpha</taxon>
        <taxon>Muroidea</taxon>
        <taxon>Muridae</taxon>
        <taxon>Murinae</taxon>
        <taxon>Rattus</taxon>
    </lineage>
</organism>
<sequence length="523" mass="59842">MAALRRLLWPPPRLSPTLAPQQPFLSPWGRPAGTAPGMSGRPFSGREEDEGAVAEAAWRRRRWGELSIAAAAGGGLVGLVCYQLYGDPRADPSELVAPELDESPRGRGLLPIPVAAAKETVATGRAVTEDLDLYATSRERRFRLFASIECEGQLFMTPYDFILAVTTDEPKFAKTWKSLSKQELSQMLSETPPVWKGSSKLFRNLKERGVISYTEYLFLLCILTKPHAGFRIAFNMFDTDGNEMVDKKEFLVLQEIFRKKNEKRETKGDEEKRAMLRLQLYGYHSPTNSVLKPDAEELVSRSYWDTLRRSTSQALFSDLAERADDITSLVADTTLLVHFFGKKGKAELNFEDFYRFMDNLQTEVLEIEFLSYSNGMNTISEEDFAHILLRYTNVENTSVFLENVRYSIPEEKGITFDEFRSFFQFLNNLEDFAIALNMYNFASRSIGQDEFKRAVYVATGLKLSPHLVNTVFKIFDVDKDDQLSYKEFIGIMKDRLHRGFRGYKTVQKYPTFKSCLKKELHSR</sequence>
<evidence type="ECO:0000250" key="1">
    <source>
        <dbReference type="UniProtKB" id="Q86XE3"/>
    </source>
</evidence>
<evidence type="ECO:0000250" key="2">
    <source>
        <dbReference type="UniProtKB" id="Q8IYU8"/>
    </source>
</evidence>
<evidence type="ECO:0000250" key="3">
    <source>
        <dbReference type="UniProtKB" id="Q9CTY5"/>
    </source>
</evidence>
<evidence type="ECO:0000255" key="4"/>
<evidence type="ECO:0000255" key="5">
    <source>
        <dbReference type="PROSITE-ProRule" id="PRU00448"/>
    </source>
</evidence>
<evidence type="ECO:0000256" key="6">
    <source>
        <dbReference type="SAM" id="MobiDB-lite"/>
    </source>
</evidence>
<evidence type="ECO:0000269" key="7">
    <source>
    </source>
</evidence>
<evidence type="ECO:0000303" key="8">
    <source>
    </source>
</evidence>
<evidence type="ECO:0000305" key="9"/>
<evidence type="ECO:0000312" key="10">
    <source>
        <dbReference type="RGD" id="1563411"/>
    </source>
</evidence>
<comment type="function">
    <text evidence="3 7">Tissue-specific calcium sensor of the mitochondrial calcium uniporter (MCU) channel, which specifically regulates MCU channel activity in the central nervous system and skeletal muscle (PubMed:31862210). Senses calcium level via its EF-hand domains: compared to MICU1 and MICU2, MICU3 has a higher affinity for calcium (PubMed:31862210). MICU1 and MICU3 form a disulfide-linked heterodimer that stimulates and inhibits MCU activity, depending on the concentration of calcium (PubMed:31862210). At low calcium levels, MICU1 occludes the pore of the MCU channel, preventing mitochondrial calcium uptake (PubMed:31862210). At higher calcium levels, calcium-binding to MICU1 and MICU3 induces a conformational change that weakens MCU-MICU1 interactions and moves the MICU1-MICU3 heterodimer away from the pore, allowing calcium permeation through the MCU channel (PubMed:31862210). The high calcium affinity of MICU3 lowers the calcium threshold necessary for calcium permeation through the MCU channel (PubMed:31862210). The MICU1-MICU3 heterodimer promotes flexibility of neurotransmission in neuronal cells by enhancing mitochondrial calcium uptake in presynapses (PubMed:31862210). It is also required to increase mitochondrial calcium uptake in skeletal muscle cells, thereby increasing ATP production (By similarity).</text>
</comment>
<comment type="subunit">
    <text evidence="1 2">Heterodimer; disulfide-linked; heterodimerizes with MICU1 (By similarity). Component of the uniplex complex, composed of MCU, EMRE/SMDT1, MICU1 and MICU3 in a 4:4:1:1 stoichiometry (By similarity).</text>
</comment>
<comment type="subcellular location">
    <subcellularLocation>
        <location evidence="2">Mitochondrion intermembrane space</location>
    </subcellularLocation>
    <subcellularLocation>
        <location evidence="2">Mitochondrion inner membrane</location>
    </subcellularLocation>
    <text evidence="2">Recruited to the mitochondrial inner membrane via its association with the uniplex complex.</text>
</comment>
<comment type="domain">
    <text evidence="1">EF-hand domains 1 and 3 have high affinity for calcium and act as sensors of mitochondrial matrix calcium levels (By similarity). EF-hand domain 2 is degenerate (By similarity).</text>
</comment>
<comment type="similarity">
    <text evidence="9">Belongs to the MICU1 family. MICU3 subfamily.</text>
</comment>